<accession>Q9F4K4</accession>
<protein>
    <recommendedName>
        <fullName>Molybdenum transport protein ModE</fullName>
    </recommendedName>
</protein>
<evidence type="ECO:0000255" key="1">
    <source>
        <dbReference type="PROSITE-ProRule" id="PRU01213"/>
    </source>
</evidence>
<evidence type="ECO:0000305" key="2"/>
<comment type="function">
    <text>Involved in the transport of molybdenum into the cell. May have a role in the early intracellular capture or metabolism of molybdenum.</text>
</comment>
<comment type="similarity">
    <text evidence="2">Belongs to the ModE family.</text>
</comment>
<organism>
    <name type="scientific">Herbaspirillum seropedicae</name>
    <dbReference type="NCBI Taxonomy" id="964"/>
    <lineage>
        <taxon>Bacteria</taxon>
        <taxon>Pseudomonadati</taxon>
        <taxon>Pseudomonadota</taxon>
        <taxon>Betaproteobacteria</taxon>
        <taxon>Burkholderiales</taxon>
        <taxon>Oxalobacteraceae</taxon>
        <taxon>Herbaspirillum</taxon>
    </lineage>
</organism>
<feature type="chain" id="PRO_0000201131" description="Molybdenum transport protein ModE">
    <location>
        <begin position="1"/>
        <end position="269"/>
    </location>
</feature>
<feature type="domain" description="Mop 1" evidence="1">
    <location>
        <begin position="128"/>
        <end position="194"/>
    </location>
</feature>
<feature type="domain" description="Mop 2" evidence="1">
    <location>
        <begin position="200"/>
        <end position="266"/>
    </location>
</feature>
<sequence>MSTLPATDTTLLSSELKLVHRLDQRFFALLDAIAQTGSINRAASTAGYSYKGAWMLLESAGNLVNGALIETVTGGKGGGGTRLTPAAVELLAVWRELQRRNLEFLHRQETWLNQLPALAGLLRRMSMKTSARNQFAGVISAIDTGPVTTQVTVTIAGAQEIVATMTTTAANRLKLRIGSNAIALIKSSAVVLVTDFAGFSLSARNQFEGTVSRVERGAVSSLVVLTLPGGACMTASLTNDAIDALSLAVGQTATAVFKAYAVMVAVQQD</sequence>
<reference key="1">
    <citation type="submission" date="2000-08" db="EMBL/GenBank/DDBJ databases">
        <title>Sequence of the modE gene from Herbaspirillum seropedicae.</title>
        <authorList>
            <person name="Voigt E.L."/>
            <person name="Pedrosa F.O."/>
            <person name="Souza E.M."/>
            <person name="Chubatsu L.S."/>
            <person name="Rigo L.U."/>
            <person name="Steffens M.B.R."/>
        </authorList>
    </citation>
    <scope>NUCLEOTIDE SEQUENCE [GENOMIC DNA]</scope>
</reference>
<name>MODE_HERSE</name>
<keyword id="KW-0500">Molybdenum</keyword>
<keyword id="KW-0677">Repeat</keyword>
<keyword id="KW-0813">Transport</keyword>
<proteinExistence type="inferred from homology"/>
<dbReference type="EMBL" id="AY007317">
    <property type="protein sequence ID" value="AAG12168.1"/>
    <property type="molecule type" value="Genomic_DNA"/>
</dbReference>
<dbReference type="RefSeq" id="WP_013234839.1">
    <property type="nucleotide sequence ID" value="NZ_JWZZ01000017.1"/>
</dbReference>
<dbReference type="SMR" id="Q9F4K4"/>
<dbReference type="OMA" id="MRNQWPC"/>
<dbReference type="GO" id="GO:0030151">
    <property type="term" value="F:molybdenum ion binding"/>
    <property type="evidence" value="ECO:0007669"/>
    <property type="project" value="InterPro"/>
</dbReference>
<dbReference type="GO" id="GO:0015689">
    <property type="term" value="P:molybdate ion transport"/>
    <property type="evidence" value="ECO:0007669"/>
    <property type="project" value="InterPro"/>
</dbReference>
<dbReference type="GO" id="GO:0006355">
    <property type="term" value="P:regulation of DNA-templated transcription"/>
    <property type="evidence" value="ECO:0007669"/>
    <property type="project" value="InterPro"/>
</dbReference>
<dbReference type="Gene3D" id="2.40.50.100">
    <property type="match status" value="2"/>
</dbReference>
<dbReference type="Gene3D" id="1.10.10.10">
    <property type="entry name" value="Winged helix-like DNA-binding domain superfamily/Winged helix DNA-binding domain"/>
    <property type="match status" value="1"/>
</dbReference>
<dbReference type="InterPro" id="IPR008995">
    <property type="entry name" value="Mo/tungstate-bd_C_term_dom"/>
</dbReference>
<dbReference type="InterPro" id="IPR016462">
    <property type="entry name" value="ModE"/>
</dbReference>
<dbReference type="InterPro" id="IPR051815">
    <property type="entry name" value="Molybdate_resp_trans_reg"/>
</dbReference>
<dbReference type="InterPro" id="IPR004606">
    <property type="entry name" value="Mop_domain"/>
</dbReference>
<dbReference type="InterPro" id="IPR005116">
    <property type="entry name" value="Transp-assoc_OB_typ1"/>
</dbReference>
<dbReference type="InterPro" id="IPR036388">
    <property type="entry name" value="WH-like_DNA-bd_sf"/>
</dbReference>
<dbReference type="InterPro" id="IPR036390">
    <property type="entry name" value="WH_DNA-bd_sf"/>
</dbReference>
<dbReference type="NCBIfam" id="TIGR00638">
    <property type="entry name" value="Mop"/>
    <property type="match status" value="2"/>
</dbReference>
<dbReference type="PANTHER" id="PTHR30432:SF1">
    <property type="entry name" value="DNA-BINDING TRANSCRIPTIONAL DUAL REGULATOR MODE"/>
    <property type="match status" value="1"/>
</dbReference>
<dbReference type="PANTHER" id="PTHR30432">
    <property type="entry name" value="TRANSCRIPTIONAL REGULATOR MODE"/>
    <property type="match status" value="1"/>
</dbReference>
<dbReference type="Pfam" id="PF03459">
    <property type="entry name" value="TOBE"/>
    <property type="match status" value="2"/>
</dbReference>
<dbReference type="PIRSF" id="PIRSF005763">
    <property type="entry name" value="Txn_reg_ModE"/>
    <property type="match status" value="1"/>
</dbReference>
<dbReference type="SUPFAM" id="SSF50331">
    <property type="entry name" value="MOP-like"/>
    <property type="match status" value="2"/>
</dbReference>
<dbReference type="SUPFAM" id="SSF46785">
    <property type="entry name" value="Winged helix' DNA-binding domain"/>
    <property type="match status" value="1"/>
</dbReference>
<dbReference type="PROSITE" id="PS51866">
    <property type="entry name" value="MOP"/>
    <property type="match status" value="2"/>
</dbReference>
<gene>
    <name type="primary">modE</name>
</gene>